<sequence>MHPTRSFQGLILTLHNYWAEHGCAILQPYDMEVGAGTFHPATTLRSLGPKPWKAAYVQPSRRPKDGRYGENPNRLQHYYQYQVLIKPSPPNLQDLYLGSLKAIGLDPTLHDVRFVEDDWESPTLGAWGLGWECWCDGMEVSQFTYFQQVCGIECSPVAGELTYGLERLAMYVQGVDNVYDLNFNGLEGDEKVTYGDVFLQAEQEYSRYNFEMANTETLHQHFIDAERECEAILKAGSTGENSLHKCVFPAYDQCIKASHVFNLMDARGVISVTERQGYILRVRNLARQCGEAFLLTDAGGFNFKREGE</sequence>
<protein>
    <recommendedName>
        <fullName evidence="1">Glycine--tRNA ligase alpha subunit</fullName>
        <ecNumber evidence="1">6.1.1.14</ecNumber>
    </recommendedName>
    <alternativeName>
        <fullName evidence="1">Glycyl-tRNA synthetase alpha subunit</fullName>
        <shortName evidence="1">GlyRS</shortName>
    </alternativeName>
</protein>
<comment type="catalytic activity">
    <reaction evidence="1">
        <text>tRNA(Gly) + glycine + ATP = glycyl-tRNA(Gly) + AMP + diphosphate</text>
        <dbReference type="Rhea" id="RHEA:16013"/>
        <dbReference type="Rhea" id="RHEA-COMP:9664"/>
        <dbReference type="Rhea" id="RHEA-COMP:9683"/>
        <dbReference type="ChEBI" id="CHEBI:30616"/>
        <dbReference type="ChEBI" id="CHEBI:33019"/>
        <dbReference type="ChEBI" id="CHEBI:57305"/>
        <dbReference type="ChEBI" id="CHEBI:78442"/>
        <dbReference type="ChEBI" id="CHEBI:78522"/>
        <dbReference type="ChEBI" id="CHEBI:456215"/>
        <dbReference type="EC" id="6.1.1.14"/>
    </reaction>
</comment>
<comment type="subunit">
    <text evidence="1">Tetramer of two alpha and two beta subunits.</text>
</comment>
<comment type="subcellular location">
    <subcellularLocation>
        <location evidence="1">Cytoplasm</location>
    </subcellularLocation>
</comment>
<comment type="similarity">
    <text evidence="1">Belongs to the class-II aminoacyl-tRNA synthetase family.</text>
</comment>
<evidence type="ECO:0000255" key="1">
    <source>
        <dbReference type="HAMAP-Rule" id="MF_00254"/>
    </source>
</evidence>
<dbReference type="EC" id="6.1.1.14" evidence="1"/>
<dbReference type="EMBL" id="CP001488">
    <property type="protein sequence ID" value="ACO00218.1"/>
    <property type="molecule type" value="Genomic_DNA"/>
</dbReference>
<dbReference type="RefSeq" id="WP_002963561.1">
    <property type="nucleotide sequence ID" value="NC_012441.1"/>
</dbReference>
<dbReference type="SMR" id="C0RHB0"/>
<dbReference type="KEGG" id="bmi:BMEA_A0434"/>
<dbReference type="HOGENOM" id="CLU_057066_1_0_5"/>
<dbReference type="Proteomes" id="UP000001748">
    <property type="component" value="Chromosome I"/>
</dbReference>
<dbReference type="GO" id="GO:0005829">
    <property type="term" value="C:cytosol"/>
    <property type="evidence" value="ECO:0007669"/>
    <property type="project" value="TreeGrafter"/>
</dbReference>
<dbReference type="GO" id="GO:0005524">
    <property type="term" value="F:ATP binding"/>
    <property type="evidence" value="ECO:0007669"/>
    <property type="project" value="UniProtKB-UniRule"/>
</dbReference>
<dbReference type="GO" id="GO:0004820">
    <property type="term" value="F:glycine-tRNA ligase activity"/>
    <property type="evidence" value="ECO:0007669"/>
    <property type="project" value="UniProtKB-UniRule"/>
</dbReference>
<dbReference type="GO" id="GO:0006426">
    <property type="term" value="P:glycyl-tRNA aminoacylation"/>
    <property type="evidence" value="ECO:0007669"/>
    <property type="project" value="UniProtKB-UniRule"/>
</dbReference>
<dbReference type="CDD" id="cd00733">
    <property type="entry name" value="GlyRS_alpha_core"/>
    <property type="match status" value="1"/>
</dbReference>
<dbReference type="FunFam" id="3.30.930.10:FF:000006">
    <property type="entry name" value="Glycine--tRNA ligase alpha subunit"/>
    <property type="match status" value="1"/>
</dbReference>
<dbReference type="Gene3D" id="3.30.930.10">
    <property type="entry name" value="Bira Bifunctional Protein, Domain 2"/>
    <property type="match status" value="1"/>
</dbReference>
<dbReference type="Gene3D" id="1.20.58.180">
    <property type="entry name" value="Class II aaRS and biotin synthetases, domain 2"/>
    <property type="match status" value="1"/>
</dbReference>
<dbReference type="HAMAP" id="MF_00254">
    <property type="entry name" value="Gly_tRNA_synth_alpha"/>
    <property type="match status" value="1"/>
</dbReference>
<dbReference type="InterPro" id="IPR045864">
    <property type="entry name" value="aa-tRNA-synth_II/BPL/LPL"/>
</dbReference>
<dbReference type="InterPro" id="IPR006194">
    <property type="entry name" value="Gly-tRNA-synth_heterodimer"/>
</dbReference>
<dbReference type="InterPro" id="IPR002310">
    <property type="entry name" value="Gly-tRNA_ligase_asu"/>
</dbReference>
<dbReference type="NCBIfam" id="TIGR00388">
    <property type="entry name" value="glyQ"/>
    <property type="match status" value="1"/>
</dbReference>
<dbReference type="NCBIfam" id="NF006827">
    <property type="entry name" value="PRK09348.1"/>
    <property type="match status" value="1"/>
</dbReference>
<dbReference type="PANTHER" id="PTHR30075:SF2">
    <property type="entry name" value="GLYCINE--TRNA LIGASE, CHLOROPLASTIC_MITOCHONDRIAL 2"/>
    <property type="match status" value="1"/>
</dbReference>
<dbReference type="PANTHER" id="PTHR30075">
    <property type="entry name" value="GLYCYL-TRNA SYNTHETASE"/>
    <property type="match status" value="1"/>
</dbReference>
<dbReference type="Pfam" id="PF02091">
    <property type="entry name" value="tRNA-synt_2e"/>
    <property type="match status" value="1"/>
</dbReference>
<dbReference type="PRINTS" id="PR01044">
    <property type="entry name" value="TRNASYNTHGA"/>
</dbReference>
<dbReference type="SUPFAM" id="SSF55681">
    <property type="entry name" value="Class II aaRS and biotin synthetases"/>
    <property type="match status" value="1"/>
</dbReference>
<dbReference type="PROSITE" id="PS50861">
    <property type="entry name" value="AA_TRNA_LIGASE_II_GLYAB"/>
    <property type="match status" value="1"/>
</dbReference>
<gene>
    <name evidence="1" type="primary">glyQ</name>
    <name type="ordered locus">BMEA_A0434</name>
</gene>
<feature type="chain" id="PRO_1000125538" description="Glycine--tRNA ligase alpha subunit">
    <location>
        <begin position="1"/>
        <end position="308"/>
    </location>
</feature>
<organism>
    <name type="scientific">Brucella melitensis biotype 2 (strain ATCC 23457)</name>
    <dbReference type="NCBI Taxonomy" id="546272"/>
    <lineage>
        <taxon>Bacteria</taxon>
        <taxon>Pseudomonadati</taxon>
        <taxon>Pseudomonadota</taxon>
        <taxon>Alphaproteobacteria</taxon>
        <taxon>Hyphomicrobiales</taxon>
        <taxon>Brucellaceae</taxon>
        <taxon>Brucella/Ochrobactrum group</taxon>
        <taxon>Brucella</taxon>
    </lineage>
</organism>
<keyword id="KW-0030">Aminoacyl-tRNA synthetase</keyword>
<keyword id="KW-0067">ATP-binding</keyword>
<keyword id="KW-0963">Cytoplasm</keyword>
<keyword id="KW-0436">Ligase</keyword>
<keyword id="KW-0547">Nucleotide-binding</keyword>
<keyword id="KW-0648">Protein biosynthesis</keyword>
<proteinExistence type="inferred from homology"/>
<name>SYGA_BRUMB</name>
<reference key="1">
    <citation type="submission" date="2009-03" db="EMBL/GenBank/DDBJ databases">
        <title>Brucella melitensis ATCC 23457 whole genome shotgun sequencing project.</title>
        <authorList>
            <person name="Setubal J.C."/>
            <person name="Boyle S."/>
            <person name="Crasta O.R."/>
            <person name="Gillespie J.J."/>
            <person name="Kenyon R.W."/>
            <person name="Lu J."/>
            <person name="Mane S."/>
            <person name="Nagrani S."/>
            <person name="Shallom J.M."/>
            <person name="Shallom S."/>
            <person name="Shukla M."/>
            <person name="Snyder E.E."/>
            <person name="Sobral B.W."/>
            <person name="Wattam A.R."/>
            <person name="Will R."/>
            <person name="Williams K."/>
            <person name="Yoo H."/>
            <person name="Munk C."/>
            <person name="Tapia R."/>
            <person name="Han C."/>
            <person name="Detter J.C."/>
            <person name="Bruce D."/>
            <person name="Brettin T.S."/>
        </authorList>
    </citation>
    <scope>NUCLEOTIDE SEQUENCE [LARGE SCALE GENOMIC DNA]</scope>
    <source>
        <strain>ATCC 23457</strain>
    </source>
</reference>
<accession>C0RHB0</accession>